<feature type="chain" id="PRO_0000155252" description="Thymidylate kinase">
    <location>
        <begin position="1"/>
        <end position="206"/>
    </location>
</feature>
<feature type="binding site" evidence="1">
    <location>
        <begin position="11"/>
        <end position="18"/>
    </location>
    <ligand>
        <name>ATP</name>
        <dbReference type="ChEBI" id="CHEBI:30616"/>
    </ligand>
</feature>
<protein>
    <recommendedName>
        <fullName evidence="1">Thymidylate kinase</fullName>
        <ecNumber evidence="1">2.7.4.9</ecNumber>
    </recommendedName>
    <alternativeName>
        <fullName evidence="1">dTMP kinase</fullName>
    </alternativeName>
</protein>
<name>KTHY_BURMA</name>
<evidence type="ECO:0000255" key="1">
    <source>
        <dbReference type="HAMAP-Rule" id="MF_00165"/>
    </source>
</evidence>
<sequence>MARGKFITFEGIDGAGKTTHLQWFCDRLQERLGPTGRHVVVTREPGGTQLGETLREILLNQPMDLETEALLMFAGRREHLALVIEPALARGDWVVSDRFTDATFAYQGGGRGLPRDKLEALERWVQGGFQPDLTVLFDVQPQVASARRGAVRMPDKFESESDAFFARTRAEYLRRAHEAPHRFAIVDSSESIPQIRKQLEGVLAAL</sequence>
<comment type="function">
    <text evidence="1">Phosphorylation of dTMP to form dTDP in both de novo and salvage pathways of dTTP synthesis.</text>
</comment>
<comment type="catalytic activity">
    <reaction evidence="1">
        <text>dTMP + ATP = dTDP + ADP</text>
        <dbReference type="Rhea" id="RHEA:13517"/>
        <dbReference type="ChEBI" id="CHEBI:30616"/>
        <dbReference type="ChEBI" id="CHEBI:58369"/>
        <dbReference type="ChEBI" id="CHEBI:63528"/>
        <dbReference type="ChEBI" id="CHEBI:456216"/>
        <dbReference type="EC" id="2.7.4.9"/>
    </reaction>
</comment>
<comment type="similarity">
    <text evidence="1">Belongs to the thymidylate kinase family.</text>
</comment>
<proteinExistence type="inferred from homology"/>
<keyword id="KW-0067">ATP-binding</keyword>
<keyword id="KW-0418">Kinase</keyword>
<keyword id="KW-0545">Nucleotide biosynthesis</keyword>
<keyword id="KW-0547">Nucleotide-binding</keyword>
<keyword id="KW-1185">Reference proteome</keyword>
<keyword id="KW-0808">Transferase</keyword>
<dbReference type="EC" id="2.7.4.9" evidence="1"/>
<dbReference type="EMBL" id="CP000010">
    <property type="protein sequence ID" value="AAU47630.1"/>
    <property type="molecule type" value="Genomic_DNA"/>
</dbReference>
<dbReference type="RefSeq" id="WP_004193022.1">
    <property type="nucleotide sequence ID" value="NC_006348.1"/>
</dbReference>
<dbReference type="RefSeq" id="YP_103080.1">
    <property type="nucleotide sequence ID" value="NC_006348.1"/>
</dbReference>
<dbReference type="SMR" id="Q62JN9"/>
<dbReference type="GeneID" id="92979159"/>
<dbReference type="KEGG" id="bma:BMA1425"/>
<dbReference type="PATRIC" id="fig|243160.12.peg.1467"/>
<dbReference type="eggNOG" id="COG0125">
    <property type="taxonomic scope" value="Bacteria"/>
</dbReference>
<dbReference type="HOGENOM" id="CLU_049131_0_2_4"/>
<dbReference type="Proteomes" id="UP000006693">
    <property type="component" value="Chromosome 1"/>
</dbReference>
<dbReference type="GO" id="GO:0005829">
    <property type="term" value="C:cytosol"/>
    <property type="evidence" value="ECO:0007669"/>
    <property type="project" value="TreeGrafter"/>
</dbReference>
<dbReference type="GO" id="GO:0005524">
    <property type="term" value="F:ATP binding"/>
    <property type="evidence" value="ECO:0007669"/>
    <property type="project" value="UniProtKB-UniRule"/>
</dbReference>
<dbReference type="GO" id="GO:0004798">
    <property type="term" value="F:dTMP kinase activity"/>
    <property type="evidence" value="ECO:0007669"/>
    <property type="project" value="UniProtKB-UniRule"/>
</dbReference>
<dbReference type="GO" id="GO:0006233">
    <property type="term" value="P:dTDP biosynthetic process"/>
    <property type="evidence" value="ECO:0007669"/>
    <property type="project" value="InterPro"/>
</dbReference>
<dbReference type="GO" id="GO:0006235">
    <property type="term" value="P:dTTP biosynthetic process"/>
    <property type="evidence" value="ECO:0007669"/>
    <property type="project" value="UniProtKB-UniRule"/>
</dbReference>
<dbReference type="GO" id="GO:0006227">
    <property type="term" value="P:dUDP biosynthetic process"/>
    <property type="evidence" value="ECO:0007669"/>
    <property type="project" value="TreeGrafter"/>
</dbReference>
<dbReference type="CDD" id="cd01672">
    <property type="entry name" value="TMPK"/>
    <property type="match status" value="1"/>
</dbReference>
<dbReference type="FunFam" id="3.40.50.300:FF:000225">
    <property type="entry name" value="Thymidylate kinase"/>
    <property type="match status" value="1"/>
</dbReference>
<dbReference type="Gene3D" id="3.40.50.300">
    <property type="entry name" value="P-loop containing nucleotide triphosphate hydrolases"/>
    <property type="match status" value="1"/>
</dbReference>
<dbReference type="HAMAP" id="MF_00165">
    <property type="entry name" value="Thymidylate_kinase"/>
    <property type="match status" value="1"/>
</dbReference>
<dbReference type="InterPro" id="IPR027417">
    <property type="entry name" value="P-loop_NTPase"/>
</dbReference>
<dbReference type="InterPro" id="IPR039430">
    <property type="entry name" value="Thymidylate_kin-like_dom"/>
</dbReference>
<dbReference type="InterPro" id="IPR018094">
    <property type="entry name" value="Thymidylate_kinase"/>
</dbReference>
<dbReference type="NCBIfam" id="TIGR00041">
    <property type="entry name" value="DTMP_kinase"/>
    <property type="match status" value="1"/>
</dbReference>
<dbReference type="PANTHER" id="PTHR10344">
    <property type="entry name" value="THYMIDYLATE KINASE"/>
    <property type="match status" value="1"/>
</dbReference>
<dbReference type="PANTHER" id="PTHR10344:SF4">
    <property type="entry name" value="UMP-CMP KINASE 2, MITOCHONDRIAL"/>
    <property type="match status" value="1"/>
</dbReference>
<dbReference type="Pfam" id="PF02223">
    <property type="entry name" value="Thymidylate_kin"/>
    <property type="match status" value="1"/>
</dbReference>
<dbReference type="SUPFAM" id="SSF52540">
    <property type="entry name" value="P-loop containing nucleoside triphosphate hydrolases"/>
    <property type="match status" value="1"/>
</dbReference>
<accession>Q62JN9</accession>
<organism>
    <name type="scientific">Burkholderia mallei (strain ATCC 23344)</name>
    <dbReference type="NCBI Taxonomy" id="243160"/>
    <lineage>
        <taxon>Bacteria</taxon>
        <taxon>Pseudomonadati</taxon>
        <taxon>Pseudomonadota</taxon>
        <taxon>Betaproteobacteria</taxon>
        <taxon>Burkholderiales</taxon>
        <taxon>Burkholderiaceae</taxon>
        <taxon>Burkholderia</taxon>
        <taxon>pseudomallei group</taxon>
    </lineage>
</organism>
<gene>
    <name evidence="1" type="primary">tmk</name>
    <name type="ordered locus">BMA1425</name>
</gene>
<reference key="1">
    <citation type="journal article" date="2004" name="Proc. Natl. Acad. Sci. U.S.A.">
        <title>Structural flexibility in the Burkholderia mallei genome.</title>
        <authorList>
            <person name="Nierman W.C."/>
            <person name="DeShazer D."/>
            <person name="Kim H.S."/>
            <person name="Tettelin H."/>
            <person name="Nelson K.E."/>
            <person name="Feldblyum T.V."/>
            <person name="Ulrich R.L."/>
            <person name="Ronning C.M."/>
            <person name="Brinkac L.M."/>
            <person name="Daugherty S.C."/>
            <person name="Davidsen T.D."/>
            <person name="DeBoy R.T."/>
            <person name="Dimitrov G."/>
            <person name="Dodson R.J."/>
            <person name="Durkin A.S."/>
            <person name="Gwinn M.L."/>
            <person name="Haft D.H."/>
            <person name="Khouri H.M."/>
            <person name="Kolonay J.F."/>
            <person name="Madupu R."/>
            <person name="Mohammoud Y."/>
            <person name="Nelson W.C."/>
            <person name="Radune D."/>
            <person name="Romero C.M."/>
            <person name="Sarria S."/>
            <person name="Selengut J."/>
            <person name="Shamblin C."/>
            <person name="Sullivan S.A."/>
            <person name="White O."/>
            <person name="Yu Y."/>
            <person name="Zafar N."/>
            <person name="Zhou L."/>
            <person name="Fraser C.M."/>
        </authorList>
    </citation>
    <scope>NUCLEOTIDE SEQUENCE [LARGE SCALE GENOMIC DNA]</scope>
    <source>
        <strain>ATCC 23344</strain>
    </source>
</reference>